<evidence type="ECO:0000255" key="1">
    <source>
        <dbReference type="HAMAP-Rule" id="MF_00636"/>
    </source>
</evidence>
<evidence type="ECO:0000305" key="2"/>
<feature type="chain" id="PRO_0000383223" description="Nucleotide-binding protein BamMC406_2713">
    <location>
        <begin position="1"/>
        <end position="302"/>
    </location>
</feature>
<feature type="binding site" evidence="1">
    <location>
        <begin position="8"/>
        <end position="15"/>
    </location>
    <ligand>
        <name>ATP</name>
        <dbReference type="ChEBI" id="CHEBI:30616"/>
    </ligand>
</feature>
<feature type="binding site" evidence="1">
    <location>
        <begin position="57"/>
        <end position="60"/>
    </location>
    <ligand>
        <name>GTP</name>
        <dbReference type="ChEBI" id="CHEBI:37565"/>
    </ligand>
</feature>
<dbReference type="EMBL" id="CP001025">
    <property type="protein sequence ID" value="ACB65190.1"/>
    <property type="status" value="ALT_INIT"/>
    <property type="molecule type" value="Genomic_DNA"/>
</dbReference>
<dbReference type="SMR" id="B1YN45"/>
<dbReference type="KEGG" id="bac:BamMC406_2713"/>
<dbReference type="HOGENOM" id="CLU_059558_1_1_4"/>
<dbReference type="OrthoDB" id="9784461at2"/>
<dbReference type="Proteomes" id="UP000001680">
    <property type="component" value="Chromosome 1"/>
</dbReference>
<dbReference type="GO" id="GO:0005524">
    <property type="term" value="F:ATP binding"/>
    <property type="evidence" value="ECO:0007669"/>
    <property type="project" value="UniProtKB-UniRule"/>
</dbReference>
<dbReference type="GO" id="GO:0005525">
    <property type="term" value="F:GTP binding"/>
    <property type="evidence" value="ECO:0007669"/>
    <property type="project" value="UniProtKB-UniRule"/>
</dbReference>
<dbReference type="Gene3D" id="3.40.50.300">
    <property type="entry name" value="P-loop containing nucleotide triphosphate hydrolases"/>
    <property type="match status" value="1"/>
</dbReference>
<dbReference type="HAMAP" id="MF_00636">
    <property type="entry name" value="RapZ_like"/>
    <property type="match status" value="1"/>
</dbReference>
<dbReference type="InterPro" id="IPR027417">
    <property type="entry name" value="P-loop_NTPase"/>
</dbReference>
<dbReference type="InterPro" id="IPR005337">
    <property type="entry name" value="RapZ-like"/>
</dbReference>
<dbReference type="InterPro" id="IPR053930">
    <property type="entry name" value="RapZ-like_N"/>
</dbReference>
<dbReference type="InterPro" id="IPR053931">
    <property type="entry name" value="RapZ_C"/>
</dbReference>
<dbReference type="NCBIfam" id="NF003828">
    <property type="entry name" value="PRK05416.1"/>
    <property type="match status" value="1"/>
</dbReference>
<dbReference type="PANTHER" id="PTHR30448">
    <property type="entry name" value="RNASE ADAPTER PROTEIN RAPZ"/>
    <property type="match status" value="1"/>
</dbReference>
<dbReference type="PANTHER" id="PTHR30448:SF0">
    <property type="entry name" value="RNASE ADAPTER PROTEIN RAPZ"/>
    <property type="match status" value="1"/>
</dbReference>
<dbReference type="Pfam" id="PF22740">
    <property type="entry name" value="PapZ_C"/>
    <property type="match status" value="1"/>
</dbReference>
<dbReference type="Pfam" id="PF03668">
    <property type="entry name" value="RapZ-like_N"/>
    <property type="match status" value="1"/>
</dbReference>
<dbReference type="PIRSF" id="PIRSF005052">
    <property type="entry name" value="P-loopkin"/>
    <property type="match status" value="1"/>
</dbReference>
<dbReference type="SUPFAM" id="SSF52540">
    <property type="entry name" value="P-loop containing nucleoside triphosphate hydrolases"/>
    <property type="match status" value="1"/>
</dbReference>
<sequence length="302" mass="33693">MRIVLITGISGSGKSVALNALEDAGYYCVDNLPPHVLPELARYLADGGQHRLAVAIDARSSASLDELPGLIRSLSLEHDVRVLFLNASTQALIQRFSETRRRHPLSGSPSHDANIGLLSSLEEAIERERDLVAPLAEFGHQIDTSTLRANVLRTWVKRFIEQKNNDLMVMFESFGFKRGVPLDADLMFDVRALPNPYYDHELRPLTGLDQPVIAFLDALPIVHQMIDDIHAFLMKWLPHFREDNRSYLTVAIGCTGGQHRSVFIAETLAARLAHDANVIVRHRDAPVDVDASSRLVTEVDRP</sequence>
<reference key="1">
    <citation type="submission" date="2008-04" db="EMBL/GenBank/DDBJ databases">
        <title>Complete sequence of chromosome 1 of Burkholderia ambifaria MC40-6.</title>
        <authorList>
            <person name="Copeland A."/>
            <person name="Lucas S."/>
            <person name="Lapidus A."/>
            <person name="Glavina del Rio T."/>
            <person name="Dalin E."/>
            <person name="Tice H."/>
            <person name="Pitluck S."/>
            <person name="Chain P."/>
            <person name="Malfatti S."/>
            <person name="Shin M."/>
            <person name="Vergez L."/>
            <person name="Lang D."/>
            <person name="Schmutz J."/>
            <person name="Larimer F."/>
            <person name="Land M."/>
            <person name="Hauser L."/>
            <person name="Kyrpides N."/>
            <person name="Lykidis A."/>
            <person name="Ramette A."/>
            <person name="Konstantinidis K."/>
            <person name="Tiedje J."/>
            <person name="Richardson P."/>
        </authorList>
    </citation>
    <scope>NUCLEOTIDE SEQUENCE [LARGE SCALE GENOMIC DNA]</scope>
    <source>
        <strain>MC40-6</strain>
    </source>
</reference>
<keyword id="KW-0067">ATP-binding</keyword>
<keyword id="KW-0342">GTP-binding</keyword>
<keyword id="KW-0547">Nucleotide-binding</keyword>
<gene>
    <name type="ordered locus">BamMC406_2713</name>
</gene>
<organism>
    <name type="scientific">Burkholderia ambifaria (strain MC40-6)</name>
    <dbReference type="NCBI Taxonomy" id="398577"/>
    <lineage>
        <taxon>Bacteria</taxon>
        <taxon>Pseudomonadati</taxon>
        <taxon>Pseudomonadota</taxon>
        <taxon>Betaproteobacteria</taxon>
        <taxon>Burkholderiales</taxon>
        <taxon>Burkholderiaceae</taxon>
        <taxon>Burkholderia</taxon>
        <taxon>Burkholderia cepacia complex</taxon>
    </lineage>
</organism>
<accession>B1YN45</accession>
<proteinExistence type="inferred from homology"/>
<protein>
    <recommendedName>
        <fullName evidence="1">Nucleotide-binding protein BamMC406_2713</fullName>
    </recommendedName>
</protein>
<comment type="function">
    <text evidence="1">Displays ATPase and GTPase activities.</text>
</comment>
<comment type="similarity">
    <text evidence="1">Belongs to the RapZ-like family.</text>
</comment>
<comment type="sequence caution" evidence="2">
    <conflict type="erroneous initiation">
        <sequence resource="EMBL-CDS" id="ACB65190"/>
    </conflict>
</comment>
<name>Y2713_BURA4</name>